<reference key="1">
    <citation type="submission" date="2008-01" db="EMBL/GenBank/DDBJ databases">
        <title>Complete sequence of Shewanella halifaxensis HAW-EB4.</title>
        <authorList>
            <consortium name="US DOE Joint Genome Institute"/>
            <person name="Copeland A."/>
            <person name="Lucas S."/>
            <person name="Lapidus A."/>
            <person name="Glavina del Rio T."/>
            <person name="Dalin E."/>
            <person name="Tice H."/>
            <person name="Bruce D."/>
            <person name="Goodwin L."/>
            <person name="Pitluck S."/>
            <person name="Sims D."/>
            <person name="Brettin T."/>
            <person name="Detter J.C."/>
            <person name="Han C."/>
            <person name="Kuske C.R."/>
            <person name="Schmutz J."/>
            <person name="Larimer F."/>
            <person name="Land M."/>
            <person name="Hauser L."/>
            <person name="Kyrpides N."/>
            <person name="Kim E."/>
            <person name="Zhao J.-S."/>
            <person name="Richardson P."/>
        </authorList>
    </citation>
    <scope>NUCLEOTIDE SEQUENCE [LARGE SCALE GENOMIC DNA]</scope>
    <source>
        <strain>HAW-EB4</strain>
    </source>
</reference>
<gene>
    <name evidence="1" type="primary">ftsB</name>
    <name type="ordered locus">Shal_1223</name>
</gene>
<feature type="chain" id="PRO_1000082458" description="Cell division protein FtsB">
    <location>
        <begin position="1"/>
        <end position="98"/>
    </location>
</feature>
<feature type="topological domain" description="Cytoplasmic" evidence="1">
    <location>
        <begin position="1"/>
        <end position="3"/>
    </location>
</feature>
<feature type="transmembrane region" description="Helical" evidence="1">
    <location>
        <begin position="4"/>
        <end position="21"/>
    </location>
</feature>
<feature type="topological domain" description="Periplasmic" evidence="1">
    <location>
        <begin position="22"/>
        <end position="98"/>
    </location>
</feature>
<feature type="coiled-coil region" evidence="1">
    <location>
        <begin position="31"/>
        <end position="74"/>
    </location>
</feature>
<proteinExistence type="inferred from homology"/>
<protein>
    <recommendedName>
        <fullName evidence="1">Cell division protein FtsB</fullName>
    </recommendedName>
</protein>
<evidence type="ECO:0000255" key="1">
    <source>
        <dbReference type="HAMAP-Rule" id="MF_00599"/>
    </source>
</evidence>
<sequence>MKRLLIVLIALLAMLEYRLWFGDKSLAESFHLQEQIKLQQQSNAQLVARNQILREEISDLRSGTEALEERARNELGMVKEGETFFRVVGGERDKPSND</sequence>
<keyword id="KW-0131">Cell cycle</keyword>
<keyword id="KW-0132">Cell division</keyword>
<keyword id="KW-0997">Cell inner membrane</keyword>
<keyword id="KW-1003">Cell membrane</keyword>
<keyword id="KW-0175">Coiled coil</keyword>
<keyword id="KW-0472">Membrane</keyword>
<keyword id="KW-0812">Transmembrane</keyword>
<keyword id="KW-1133">Transmembrane helix</keyword>
<comment type="function">
    <text evidence="1">Essential cell division protein. May link together the upstream cell division proteins, which are predominantly cytoplasmic, with the downstream cell division proteins, which are predominantly periplasmic.</text>
</comment>
<comment type="subunit">
    <text evidence="1">Part of a complex composed of FtsB, FtsL and FtsQ.</text>
</comment>
<comment type="subcellular location">
    <subcellularLocation>
        <location evidence="1">Cell inner membrane</location>
        <topology evidence="1">Single-pass type II membrane protein</topology>
    </subcellularLocation>
    <text evidence="1">Localizes to the division septum.</text>
</comment>
<comment type="similarity">
    <text evidence="1">Belongs to the FtsB family.</text>
</comment>
<accession>B0TK05</accession>
<name>FTSB_SHEHH</name>
<organism>
    <name type="scientific">Shewanella halifaxensis (strain HAW-EB4)</name>
    <dbReference type="NCBI Taxonomy" id="458817"/>
    <lineage>
        <taxon>Bacteria</taxon>
        <taxon>Pseudomonadati</taxon>
        <taxon>Pseudomonadota</taxon>
        <taxon>Gammaproteobacteria</taxon>
        <taxon>Alteromonadales</taxon>
        <taxon>Shewanellaceae</taxon>
        <taxon>Shewanella</taxon>
    </lineage>
</organism>
<dbReference type="EMBL" id="CP000931">
    <property type="protein sequence ID" value="ABZ75792.1"/>
    <property type="molecule type" value="Genomic_DNA"/>
</dbReference>
<dbReference type="RefSeq" id="WP_012276334.1">
    <property type="nucleotide sequence ID" value="NC_010334.1"/>
</dbReference>
<dbReference type="SMR" id="B0TK05"/>
<dbReference type="STRING" id="458817.Shal_1223"/>
<dbReference type="KEGG" id="shl:Shal_1223"/>
<dbReference type="eggNOG" id="COG2919">
    <property type="taxonomic scope" value="Bacteria"/>
</dbReference>
<dbReference type="HOGENOM" id="CLU_134863_5_2_6"/>
<dbReference type="OrthoDB" id="7061211at2"/>
<dbReference type="Proteomes" id="UP000001317">
    <property type="component" value="Chromosome"/>
</dbReference>
<dbReference type="GO" id="GO:0032153">
    <property type="term" value="C:cell division site"/>
    <property type="evidence" value="ECO:0007669"/>
    <property type="project" value="UniProtKB-UniRule"/>
</dbReference>
<dbReference type="GO" id="GO:0030428">
    <property type="term" value="C:cell septum"/>
    <property type="evidence" value="ECO:0007669"/>
    <property type="project" value="TreeGrafter"/>
</dbReference>
<dbReference type="GO" id="GO:0005886">
    <property type="term" value="C:plasma membrane"/>
    <property type="evidence" value="ECO:0007669"/>
    <property type="project" value="UniProtKB-SubCell"/>
</dbReference>
<dbReference type="GO" id="GO:0043093">
    <property type="term" value="P:FtsZ-dependent cytokinesis"/>
    <property type="evidence" value="ECO:0007669"/>
    <property type="project" value="UniProtKB-UniRule"/>
</dbReference>
<dbReference type="HAMAP" id="MF_00599">
    <property type="entry name" value="FtsB"/>
    <property type="match status" value="1"/>
</dbReference>
<dbReference type="InterPro" id="IPR023081">
    <property type="entry name" value="Cell_div_FtsB"/>
</dbReference>
<dbReference type="InterPro" id="IPR007060">
    <property type="entry name" value="FtsL/DivIC"/>
</dbReference>
<dbReference type="NCBIfam" id="NF002058">
    <property type="entry name" value="PRK00888.1"/>
    <property type="match status" value="1"/>
</dbReference>
<dbReference type="PANTHER" id="PTHR37485">
    <property type="entry name" value="CELL DIVISION PROTEIN FTSB"/>
    <property type="match status" value="1"/>
</dbReference>
<dbReference type="PANTHER" id="PTHR37485:SF1">
    <property type="entry name" value="CELL DIVISION PROTEIN FTSB"/>
    <property type="match status" value="1"/>
</dbReference>
<dbReference type="Pfam" id="PF04977">
    <property type="entry name" value="DivIC"/>
    <property type="match status" value="1"/>
</dbReference>